<gene>
    <name type="ORF">DDB_G0280133</name>
</gene>
<feature type="chain" id="PRO_0000367469" description="Probable serine/threonine-protein kinase DDB_G0280133">
    <location>
        <begin position="1"/>
        <end position="1505"/>
    </location>
</feature>
<feature type="domain" description="PAS 1" evidence="3">
    <location>
        <begin position="2"/>
        <end position="72"/>
    </location>
</feature>
<feature type="domain" description="PAS 2" evidence="3">
    <location>
        <begin position="108"/>
        <end position="178"/>
    </location>
</feature>
<feature type="domain" description="PAS 3" evidence="3">
    <location>
        <begin position="215"/>
        <end position="284"/>
    </location>
</feature>
<feature type="domain" description="Protein kinase" evidence="4">
    <location>
        <begin position="542"/>
        <end position="805"/>
    </location>
</feature>
<feature type="domain" description="FHA" evidence="2">
    <location>
        <begin position="1399"/>
        <end position="1463"/>
    </location>
</feature>
<feature type="region of interest" description="Disordered" evidence="6">
    <location>
        <begin position="282"/>
        <end position="348"/>
    </location>
</feature>
<feature type="region of interest" description="Disordered" evidence="6">
    <location>
        <begin position="398"/>
        <end position="533"/>
    </location>
</feature>
<feature type="region of interest" description="Disordered" evidence="6">
    <location>
        <begin position="855"/>
        <end position="1048"/>
    </location>
</feature>
<feature type="region of interest" description="Disordered" evidence="6">
    <location>
        <begin position="1072"/>
        <end position="1091"/>
    </location>
</feature>
<feature type="region of interest" description="Disordered" evidence="6">
    <location>
        <begin position="1181"/>
        <end position="1358"/>
    </location>
</feature>
<feature type="coiled-coil region" evidence="1">
    <location>
        <begin position="903"/>
        <end position="939"/>
    </location>
</feature>
<feature type="coiled-coil region" evidence="1">
    <location>
        <begin position="1125"/>
        <end position="1189"/>
    </location>
</feature>
<feature type="compositionally biased region" description="Low complexity" evidence="6">
    <location>
        <begin position="289"/>
        <end position="314"/>
    </location>
</feature>
<feature type="compositionally biased region" description="Low complexity" evidence="6">
    <location>
        <begin position="328"/>
        <end position="344"/>
    </location>
</feature>
<feature type="compositionally biased region" description="Basic and acidic residues" evidence="6">
    <location>
        <begin position="398"/>
        <end position="407"/>
    </location>
</feature>
<feature type="compositionally biased region" description="Basic and acidic residues" evidence="6">
    <location>
        <begin position="415"/>
        <end position="430"/>
    </location>
</feature>
<feature type="compositionally biased region" description="Basic residues" evidence="6">
    <location>
        <begin position="431"/>
        <end position="443"/>
    </location>
</feature>
<feature type="compositionally biased region" description="Low complexity" evidence="6">
    <location>
        <begin position="448"/>
        <end position="468"/>
    </location>
</feature>
<feature type="compositionally biased region" description="Basic residues" evidence="6">
    <location>
        <begin position="479"/>
        <end position="489"/>
    </location>
</feature>
<feature type="compositionally biased region" description="Low complexity" evidence="6">
    <location>
        <begin position="515"/>
        <end position="532"/>
    </location>
</feature>
<feature type="compositionally biased region" description="Low complexity" evidence="6">
    <location>
        <begin position="855"/>
        <end position="960"/>
    </location>
</feature>
<feature type="compositionally biased region" description="Polar residues" evidence="6">
    <location>
        <begin position="961"/>
        <end position="974"/>
    </location>
</feature>
<feature type="compositionally biased region" description="Low complexity" evidence="6">
    <location>
        <begin position="975"/>
        <end position="1013"/>
    </location>
</feature>
<feature type="compositionally biased region" description="Low complexity" evidence="6">
    <location>
        <begin position="1022"/>
        <end position="1048"/>
    </location>
</feature>
<feature type="compositionally biased region" description="Polar residues" evidence="6">
    <location>
        <begin position="1072"/>
        <end position="1082"/>
    </location>
</feature>
<feature type="compositionally biased region" description="Basic and acidic residues" evidence="6">
    <location>
        <begin position="1202"/>
        <end position="1271"/>
    </location>
</feature>
<feature type="compositionally biased region" description="Low complexity" evidence="6">
    <location>
        <begin position="1272"/>
        <end position="1282"/>
    </location>
</feature>
<feature type="compositionally biased region" description="Basic and acidic residues" evidence="6">
    <location>
        <begin position="1283"/>
        <end position="1301"/>
    </location>
</feature>
<feature type="compositionally biased region" description="Basic and acidic residues" evidence="6">
    <location>
        <begin position="1313"/>
        <end position="1326"/>
    </location>
</feature>
<feature type="compositionally biased region" description="Polar residues" evidence="6">
    <location>
        <begin position="1331"/>
        <end position="1347"/>
    </location>
</feature>
<feature type="active site" description="Proton acceptor" evidence="4 5">
    <location>
        <position position="684"/>
    </location>
</feature>
<feature type="binding site" evidence="4">
    <location>
        <begin position="548"/>
        <end position="556"/>
    </location>
    <ligand>
        <name>ATP</name>
        <dbReference type="ChEBI" id="CHEBI:30616"/>
    </ligand>
</feature>
<feature type="binding site" evidence="4">
    <location>
        <position position="571"/>
    </location>
    <ligand>
        <name>ATP</name>
        <dbReference type="ChEBI" id="CHEBI:30616"/>
    </ligand>
</feature>
<sequence length="1505" mass="173403">MNTHNNNYQQRSMDSAIVTINDKGYIQSVDRKTCELFGYTIEELQLQKVNILVPSPYKEQHDTYMQSYFETGVRKIIDKSRVVEGLHKDGSVFPITLSVTEVRIWNKRMFIGSIESIIDKRLIIYTDVHGIITYCNRNVEELIGYTPAELFGKNVSALMPSPHAKSHSEYIEKNYHGGGLWKMLNRVRNLPIKHKSGVVFLVSILVTKISTDGIDMFKAIIQTPPKEAVFTINGDGIIKACNFNFTEPMFGYTQKDLLGNTIGLLIPEMSKIIDNTSLNLTDSHDPQLQQQQQTTTTTTTTTTTTSTTSTTTSTPTPASIAVSGNNISSPPIDSPLTTPSTPTTFNHSRGVESWLGRTRKVDVWHRDGSRFPVNLEIIKLQGENSMFSLQIKKVENPRVYGKDKDKNGGGGGTTENKDGKQLDTIKESKEHRHSKEKKKRKKDRDHNNNNNNNNNNNNNNNEQTSDSSDSSDSDSESRSKKKRSSKKKSRRDDSSSDSSDSETESSSSPHKKNRSSNSSSNSSHSNAPHESSYYQPEMIGEYTLGKTLGRGNYGVVKLGTHINTKEEIAIKILYKEQMTESEFTRCKREIEILKQLYHPFINKLLNVLEKDDAMFILMDYCQGGDLFHYVNKFGLKGVKMVNSPDIGDQVLMGVPLPEDDTKRIFTQICLGIAHCHKLNIAHRDIKHKNILFDNQMNVKIIDFGLSNWSYQEKMSFCGTPAYAAPEMLLGINYNGPEVDIWSLGVILYSLVTGKLPFINVTDMIVGKFILPPSIPLDLQDLIKKMLTVDREHRLNIMNVLNHPWLSKDPASSTLISQNLLHSPPVVHQPQPPQHQKIQPTSIIPNFNEVETLKNNILNNNNNNNNNNNNNNNNILNSNNNNNNNNNNNSNNNNIINNSNNNSNNNNNINNNINNNNNVNNNVNNNKNNNNNNNNNSNNNSNNGNNIPNSSNNTNSIINNNLYNQSLSPQNNNIYQHSPQHQQHQHQQQHSPQQQQHQQHQHHQQQQQQLQQQHHQQHHQQHQQHQQQHQQQHQQQHQQHQQHQQSHQQPPVYFPTQIISDDFNLTSQLQRTQPNQQVSFDTNQSYQQQLQQPQIPHQVLMQQPPQILSHSNNQPINNYYVGQQPIQQIQQLQQQQQLQQQQQQQQQQQQQQQQQQQQQQQQQQQQQQQQQQQQQQQQQQQQQQQQQQNDPNFQPHLRRIKMSKRDNSYNKRKSEDGDSYKKRDNQSYDDILKDEGNKRLRELQTYSEGDKSRQHYNRDSNDNSRDNNRYNNRDNNNNNNSNNNRERDRYKKNKNENFDYGKYKFGKSNEDEENKDKPNIVREKPDFKPSGSLKNDSSSNYGTISSGRNNNNGEEDEENKIKLKWHEPAEAKLPTEKWMLYPFKGKDQLDTIYLHRKKSFLFGRNRDIADIPIDHPSCSSQHAVIVFRIRKKENPNTGSIKTFILPYIIDLESTNGTFLKGEKIEPAKYFELRPKDKITFGTSTREYILLCEDSIEGDESEEEDSD</sequence>
<protein>
    <recommendedName>
        <fullName>Probable serine/threonine-protein kinase DDB_G0280133</fullName>
        <ecNumber>2.7.11.1</ecNumber>
    </recommendedName>
</protein>
<organism>
    <name type="scientific">Dictyostelium discoideum</name>
    <name type="common">Social amoeba</name>
    <dbReference type="NCBI Taxonomy" id="44689"/>
    <lineage>
        <taxon>Eukaryota</taxon>
        <taxon>Amoebozoa</taxon>
        <taxon>Evosea</taxon>
        <taxon>Eumycetozoa</taxon>
        <taxon>Dictyostelia</taxon>
        <taxon>Dictyosteliales</taxon>
        <taxon>Dictyosteliaceae</taxon>
        <taxon>Dictyostelium</taxon>
    </lineage>
</organism>
<keyword id="KW-0067">ATP-binding</keyword>
<keyword id="KW-0175">Coiled coil</keyword>
<keyword id="KW-0418">Kinase</keyword>
<keyword id="KW-0547">Nucleotide-binding</keyword>
<keyword id="KW-1185">Reference proteome</keyword>
<keyword id="KW-0677">Repeat</keyword>
<keyword id="KW-0723">Serine/threonine-protein kinase</keyword>
<keyword id="KW-0808">Transferase</keyword>
<evidence type="ECO:0000255" key="1"/>
<evidence type="ECO:0000255" key="2">
    <source>
        <dbReference type="PROSITE-ProRule" id="PRU00086"/>
    </source>
</evidence>
<evidence type="ECO:0000255" key="3">
    <source>
        <dbReference type="PROSITE-ProRule" id="PRU00140"/>
    </source>
</evidence>
<evidence type="ECO:0000255" key="4">
    <source>
        <dbReference type="PROSITE-ProRule" id="PRU00159"/>
    </source>
</evidence>
<evidence type="ECO:0000255" key="5">
    <source>
        <dbReference type="PROSITE-ProRule" id="PRU10027"/>
    </source>
</evidence>
<evidence type="ECO:0000256" key="6">
    <source>
        <dbReference type="SAM" id="MobiDB-lite"/>
    </source>
</evidence>
<evidence type="ECO:0000305" key="7"/>
<reference key="1">
    <citation type="journal article" date="2005" name="Nature">
        <title>The genome of the social amoeba Dictyostelium discoideum.</title>
        <authorList>
            <person name="Eichinger L."/>
            <person name="Pachebat J.A."/>
            <person name="Gloeckner G."/>
            <person name="Rajandream M.A."/>
            <person name="Sucgang R."/>
            <person name="Berriman M."/>
            <person name="Song J."/>
            <person name="Olsen R."/>
            <person name="Szafranski K."/>
            <person name="Xu Q."/>
            <person name="Tunggal B."/>
            <person name="Kummerfeld S."/>
            <person name="Madera M."/>
            <person name="Konfortov B.A."/>
            <person name="Rivero F."/>
            <person name="Bankier A.T."/>
            <person name="Lehmann R."/>
            <person name="Hamlin N."/>
            <person name="Davies R."/>
            <person name="Gaudet P."/>
            <person name="Fey P."/>
            <person name="Pilcher K."/>
            <person name="Chen G."/>
            <person name="Saunders D."/>
            <person name="Sodergren E.J."/>
            <person name="Davis P."/>
            <person name="Kerhornou A."/>
            <person name="Nie X."/>
            <person name="Hall N."/>
            <person name="Anjard C."/>
            <person name="Hemphill L."/>
            <person name="Bason N."/>
            <person name="Farbrother P."/>
            <person name="Desany B."/>
            <person name="Just E."/>
            <person name="Morio T."/>
            <person name="Rost R."/>
            <person name="Churcher C.M."/>
            <person name="Cooper J."/>
            <person name="Haydock S."/>
            <person name="van Driessche N."/>
            <person name="Cronin A."/>
            <person name="Goodhead I."/>
            <person name="Muzny D.M."/>
            <person name="Mourier T."/>
            <person name="Pain A."/>
            <person name="Lu M."/>
            <person name="Harper D."/>
            <person name="Lindsay R."/>
            <person name="Hauser H."/>
            <person name="James K.D."/>
            <person name="Quiles M."/>
            <person name="Madan Babu M."/>
            <person name="Saito T."/>
            <person name="Buchrieser C."/>
            <person name="Wardroper A."/>
            <person name="Felder M."/>
            <person name="Thangavelu M."/>
            <person name="Johnson D."/>
            <person name="Knights A."/>
            <person name="Loulseged H."/>
            <person name="Mungall K.L."/>
            <person name="Oliver K."/>
            <person name="Price C."/>
            <person name="Quail M.A."/>
            <person name="Urushihara H."/>
            <person name="Hernandez J."/>
            <person name="Rabbinowitsch E."/>
            <person name="Steffen D."/>
            <person name="Sanders M."/>
            <person name="Ma J."/>
            <person name="Kohara Y."/>
            <person name="Sharp S."/>
            <person name="Simmonds M.N."/>
            <person name="Spiegler S."/>
            <person name="Tivey A."/>
            <person name="Sugano S."/>
            <person name="White B."/>
            <person name="Walker D."/>
            <person name="Woodward J.R."/>
            <person name="Winckler T."/>
            <person name="Tanaka Y."/>
            <person name="Shaulsky G."/>
            <person name="Schleicher M."/>
            <person name="Weinstock G.M."/>
            <person name="Rosenthal A."/>
            <person name="Cox E.C."/>
            <person name="Chisholm R.L."/>
            <person name="Gibbs R.A."/>
            <person name="Loomis W.F."/>
            <person name="Platzer M."/>
            <person name="Kay R.R."/>
            <person name="Williams J.G."/>
            <person name="Dear P.H."/>
            <person name="Noegel A.A."/>
            <person name="Barrell B.G."/>
            <person name="Kuspa A."/>
        </authorList>
    </citation>
    <scope>NUCLEOTIDE SEQUENCE [LARGE SCALE GENOMIC DNA]</scope>
    <source>
        <strain>AX4</strain>
    </source>
</reference>
<name>Y8013_DICDI</name>
<proteinExistence type="inferred from homology"/>
<comment type="catalytic activity">
    <reaction>
        <text>L-seryl-[protein] + ATP = O-phospho-L-seryl-[protein] + ADP + H(+)</text>
        <dbReference type="Rhea" id="RHEA:17989"/>
        <dbReference type="Rhea" id="RHEA-COMP:9863"/>
        <dbReference type="Rhea" id="RHEA-COMP:11604"/>
        <dbReference type="ChEBI" id="CHEBI:15378"/>
        <dbReference type="ChEBI" id="CHEBI:29999"/>
        <dbReference type="ChEBI" id="CHEBI:30616"/>
        <dbReference type="ChEBI" id="CHEBI:83421"/>
        <dbReference type="ChEBI" id="CHEBI:456216"/>
        <dbReference type="EC" id="2.7.11.1"/>
    </reaction>
</comment>
<comment type="catalytic activity">
    <reaction>
        <text>L-threonyl-[protein] + ATP = O-phospho-L-threonyl-[protein] + ADP + H(+)</text>
        <dbReference type="Rhea" id="RHEA:46608"/>
        <dbReference type="Rhea" id="RHEA-COMP:11060"/>
        <dbReference type="Rhea" id="RHEA-COMP:11605"/>
        <dbReference type="ChEBI" id="CHEBI:15378"/>
        <dbReference type="ChEBI" id="CHEBI:30013"/>
        <dbReference type="ChEBI" id="CHEBI:30616"/>
        <dbReference type="ChEBI" id="CHEBI:61977"/>
        <dbReference type="ChEBI" id="CHEBI:456216"/>
        <dbReference type="EC" id="2.7.11.1"/>
    </reaction>
</comment>
<comment type="similarity">
    <text evidence="7">Belongs to the protein kinase superfamily. CAMK Ser/Thr protein kinase family. SNF1 subfamily.</text>
</comment>
<accession>Q54VU4</accession>
<dbReference type="EC" id="2.7.11.1"/>
<dbReference type="EMBL" id="AAFI02000035">
    <property type="protein sequence ID" value="EAL67293.1"/>
    <property type="molecule type" value="Genomic_DNA"/>
</dbReference>
<dbReference type="RefSeq" id="XP_641261.1">
    <property type="nucleotide sequence ID" value="XM_636169.1"/>
</dbReference>
<dbReference type="SMR" id="Q54VU4"/>
<dbReference type="GlyGen" id="Q54VU4">
    <property type="glycosylation" value="1 site"/>
</dbReference>
<dbReference type="PaxDb" id="44689-DDB0231454"/>
<dbReference type="EnsemblProtists" id="EAL67293">
    <property type="protein sequence ID" value="EAL67293"/>
    <property type="gene ID" value="DDB_G0280133"/>
</dbReference>
<dbReference type="GeneID" id="8622393"/>
<dbReference type="KEGG" id="ddi:DDB_G0280133"/>
<dbReference type="dictyBase" id="DDB_G0280133"/>
<dbReference type="VEuPathDB" id="AmoebaDB:DDB_G0280133"/>
<dbReference type="eggNOG" id="KOG0586">
    <property type="taxonomic scope" value="Eukaryota"/>
</dbReference>
<dbReference type="eggNOG" id="KOG1882">
    <property type="taxonomic scope" value="Eukaryota"/>
</dbReference>
<dbReference type="HOGENOM" id="CLU_248489_0_0_1"/>
<dbReference type="InParanoid" id="Q54VU4"/>
<dbReference type="OMA" id="CEDSIEG"/>
<dbReference type="PRO" id="PR:Q54VU4"/>
<dbReference type="Proteomes" id="UP000002195">
    <property type="component" value="Chromosome 3"/>
</dbReference>
<dbReference type="GO" id="GO:0005737">
    <property type="term" value="C:cytoplasm"/>
    <property type="evidence" value="ECO:0000318"/>
    <property type="project" value="GO_Central"/>
</dbReference>
<dbReference type="GO" id="GO:0005524">
    <property type="term" value="F:ATP binding"/>
    <property type="evidence" value="ECO:0007669"/>
    <property type="project" value="UniProtKB-KW"/>
</dbReference>
<dbReference type="GO" id="GO:0106310">
    <property type="term" value="F:protein serine kinase activity"/>
    <property type="evidence" value="ECO:0007669"/>
    <property type="project" value="RHEA"/>
</dbReference>
<dbReference type="GO" id="GO:0004674">
    <property type="term" value="F:protein serine/threonine kinase activity"/>
    <property type="evidence" value="ECO:0000318"/>
    <property type="project" value="GO_Central"/>
</dbReference>
<dbReference type="GO" id="GO:0035556">
    <property type="term" value="P:intracellular signal transduction"/>
    <property type="evidence" value="ECO:0000318"/>
    <property type="project" value="GO_Central"/>
</dbReference>
<dbReference type="GO" id="GO:0006355">
    <property type="term" value="P:regulation of DNA-templated transcription"/>
    <property type="evidence" value="ECO:0007669"/>
    <property type="project" value="InterPro"/>
</dbReference>
<dbReference type="CDD" id="cd22676">
    <property type="entry name" value="FHA_SNIP1_DDL-like"/>
    <property type="match status" value="1"/>
</dbReference>
<dbReference type="CDD" id="cd00130">
    <property type="entry name" value="PAS"/>
    <property type="match status" value="3"/>
</dbReference>
<dbReference type="CDD" id="cd14003">
    <property type="entry name" value="STKc_AMPK-like"/>
    <property type="match status" value="1"/>
</dbReference>
<dbReference type="FunFam" id="3.30.200.20:FF:000003">
    <property type="entry name" value="Non-specific serine/threonine protein kinase"/>
    <property type="match status" value="1"/>
</dbReference>
<dbReference type="FunFam" id="1.10.510.10:FF:001860">
    <property type="entry name" value="Probable serine/threonine-protein kinase DDB_G0280133"/>
    <property type="match status" value="1"/>
</dbReference>
<dbReference type="FunFam" id="2.60.200.20:FF:000060">
    <property type="entry name" value="Probable serine/threonine-protein kinase DDB_G0280133"/>
    <property type="match status" value="1"/>
</dbReference>
<dbReference type="FunFam" id="3.30.450.20:FF:000060">
    <property type="entry name" value="Sensor protein FixL"/>
    <property type="match status" value="1"/>
</dbReference>
<dbReference type="Gene3D" id="2.60.200.20">
    <property type="match status" value="1"/>
</dbReference>
<dbReference type="Gene3D" id="3.30.450.20">
    <property type="entry name" value="PAS domain"/>
    <property type="match status" value="3"/>
</dbReference>
<dbReference type="Gene3D" id="1.10.510.10">
    <property type="entry name" value="Transferase(Phosphotransferase) domain 1"/>
    <property type="match status" value="1"/>
</dbReference>
<dbReference type="InterPro" id="IPR030616">
    <property type="entry name" value="Aur-like"/>
</dbReference>
<dbReference type="InterPro" id="IPR000253">
    <property type="entry name" value="FHA_dom"/>
</dbReference>
<dbReference type="InterPro" id="IPR011009">
    <property type="entry name" value="Kinase-like_dom_sf"/>
</dbReference>
<dbReference type="InterPro" id="IPR000014">
    <property type="entry name" value="PAS"/>
</dbReference>
<dbReference type="InterPro" id="IPR035965">
    <property type="entry name" value="PAS-like_dom_sf"/>
</dbReference>
<dbReference type="InterPro" id="IPR013767">
    <property type="entry name" value="PAS_fold"/>
</dbReference>
<dbReference type="InterPro" id="IPR000719">
    <property type="entry name" value="Prot_kinase_dom"/>
</dbReference>
<dbReference type="InterPro" id="IPR017441">
    <property type="entry name" value="Protein_kinase_ATP_BS"/>
</dbReference>
<dbReference type="InterPro" id="IPR008271">
    <property type="entry name" value="Ser/Thr_kinase_AS"/>
</dbReference>
<dbReference type="InterPro" id="IPR008984">
    <property type="entry name" value="SMAD_FHA_dom_sf"/>
</dbReference>
<dbReference type="NCBIfam" id="TIGR00229">
    <property type="entry name" value="sensory_box"/>
    <property type="match status" value="2"/>
</dbReference>
<dbReference type="PANTHER" id="PTHR24350">
    <property type="entry name" value="SERINE/THREONINE-PROTEIN KINASE IAL-RELATED"/>
    <property type="match status" value="1"/>
</dbReference>
<dbReference type="Pfam" id="PF00498">
    <property type="entry name" value="FHA"/>
    <property type="match status" value="1"/>
</dbReference>
<dbReference type="Pfam" id="PF00989">
    <property type="entry name" value="PAS"/>
    <property type="match status" value="2"/>
</dbReference>
<dbReference type="Pfam" id="PF13426">
    <property type="entry name" value="PAS_9"/>
    <property type="match status" value="1"/>
</dbReference>
<dbReference type="Pfam" id="PF00069">
    <property type="entry name" value="Pkinase"/>
    <property type="match status" value="1"/>
</dbReference>
<dbReference type="SMART" id="SM00240">
    <property type="entry name" value="FHA"/>
    <property type="match status" value="1"/>
</dbReference>
<dbReference type="SMART" id="SM00091">
    <property type="entry name" value="PAS"/>
    <property type="match status" value="3"/>
</dbReference>
<dbReference type="SMART" id="SM00220">
    <property type="entry name" value="S_TKc"/>
    <property type="match status" value="1"/>
</dbReference>
<dbReference type="SUPFAM" id="SSF56112">
    <property type="entry name" value="Protein kinase-like (PK-like)"/>
    <property type="match status" value="1"/>
</dbReference>
<dbReference type="SUPFAM" id="SSF55785">
    <property type="entry name" value="PYP-like sensor domain (PAS domain)"/>
    <property type="match status" value="2"/>
</dbReference>
<dbReference type="SUPFAM" id="SSF49879">
    <property type="entry name" value="SMAD/FHA domain"/>
    <property type="match status" value="1"/>
</dbReference>
<dbReference type="PROSITE" id="PS50006">
    <property type="entry name" value="FHA_DOMAIN"/>
    <property type="match status" value="1"/>
</dbReference>
<dbReference type="PROSITE" id="PS50112">
    <property type="entry name" value="PAS"/>
    <property type="match status" value="2"/>
</dbReference>
<dbReference type="PROSITE" id="PS00107">
    <property type="entry name" value="PROTEIN_KINASE_ATP"/>
    <property type="match status" value="1"/>
</dbReference>
<dbReference type="PROSITE" id="PS50011">
    <property type="entry name" value="PROTEIN_KINASE_DOM"/>
    <property type="match status" value="1"/>
</dbReference>
<dbReference type="PROSITE" id="PS00108">
    <property type="entry name" value="PROTEIN_KINASE_ST"/>
    <property type="match status" value="1"/>
</dbReference>